<feature type="chain" id="PRO_0000425947" description="Protein Ku">
    <location>
        <begin position="1"/>
        <end position="284"/>
    </location>
</feature>
<feature type="domain" description="Ku">
    <location>
        <begin position="10"/>
        <end position="189"/>
    </location>
</feature>
<dbReference type="EMBL" id="AY129335">
    <property type="protein sequence ID" value="AAN02019.1"/>
    <property type="molecule type" value="Genomic_DNA"/>
</dbReference>
<dbReference type="RefSeq" id="NP_817938.1">
    <property type="nucleotide sequence ID" value="NC_004685.1"/>
</dbReference>
<dbReference type="SMR" id="Q856K7"/>
<dbReference type="KEGG" id="vg:1259566"/>
<dbReference type="OrthoDB" id="5222at10239"/>
<dbReference type="Proteomes" id="UP000000964">
    <property type="component" value="Segment"/>
</dbReference>
<dbReference type="GO" id="GO:0003690">
    <property type="term" value="F:double-stranded DNA binding"/>
    <property type="evidence" value="ECO:0000314"/>
    <property type="project" value="UniProtKB"/>
</dbReference>
<dbReference type="GO" id="GO:0006303">
    <property type="term" value="P:double-strand break repair via nonhomologous end joining"/>
    <property type="evidence" value="ECO:0007669"/>
    <property type="project" value="InterPro"/>
</dbReference>
<dbReference type="GO" id="GO:0046718">
    <property type="term" value="P:symbiont entry into host cell"/>
    <property type="evidence" value="ECO:0007669"/>
    <property type="project" value="UniProtKB-KW"/>
</dbReference>
<dbReference type="GO" id="GO:0099016">
    <property type="term" value="P:symbiont-mediated evasion of DNA end degradation by host"/>
    <property type="evidence" value="ECO:0007669"/>
    <property type="project" value="UniProtKB-KW"/>
</dbReference>
<dbReference type="GO" id="GO:0052170">
    <property type="term" value="P:symbiont-mediated suppression of host innate immune response"/>
    <property type="evidence" value="ECO:0007669"/>
    <property type="project" value="UniProtKB-KW"/>
</dbReference>
<dbReference type="GO" id="GO:0099009">
    <property type="term" value="P:viral genome circularization"/>
    <property type="evidence" value="ECO:0007669"/>
    <property type="project" value="UniProtKB-KW"/>
</dbReference>
<dbReference type="Gene3D" id="2.40.290.10">
    <property type="match status" value="1"/>
</dbReference>
<dbReference type="InterPro" id="IPR006164">
    <property type="entry name" value="Ku70/Ku80_beta-barrel_dom"/>
</dbReference>
<dbReference type="InterPro" id="IPR009187">
    <property type="entry name" value="Prok_Ku"/>
</dbReference>
<dbReference type="InterPro" id="IPR016194">
    <property type="entry name" value="SPOC-like_C_dom_sf"/>
</dbReference>
<dbReference type="PANTHER" id="PTHR41251">
    <property type="entry name" value="NON-HOMOLOGOUS END JOINING PROTEIN KU"/>
    <property type="match status" value="1"/>
</dbReference>
<dbReference type="PANTHER" id="PTHR41251:SF1">
    <property type="entry name" value="NON-HOMOLOGOUS END JOINING PROTEIN KU"/>
    <property type="match status" value="1"/>
</dbReference>
<dbReference type="Pfam" id="PF02735">
    <property type="entry name" value="Ku"/>
    <property type="match status" value="1"/>
</dbReference>
<dbReference type="PIRSF" id="PIRSF006493">
    <property type="entry name" value="Prok_Ku"/>
    <property type="match status" value="1"/>
</dbReference>
<dbReference type="SMART" id="SM00559">
    <property type="entry name" value="Ku78"/>
    <property type="match status" value="1"/>
</dbReference>
<dbReference type="SUPFAM" id="SSF100939">
    <property type="entry name" value="SPOC domain-like"/>
    <property type="match status" value="1"/>
</dbReference>
<organism>
    <name type="scientific">Mycobacterium phage Corndog</name>
    <name type="common">Mycobacteriophage Corndog</name>
    <dbReference type="NCBI Taxonomy" id="205875"/>
    <lineage>
        <taxon>Viruses</taxon>
        <taxon>Duplodnaviria</taxon>
        <taxon>Heunggongvirae</taxon>
        <taxon>Uroviricota</taxon>
        <taxon>Caudoviricetes</taxon>
        <taxon>Corndogvirus</taxon>
    </lineage>
</organism>
<evidence type="ECO:0000269" key="1">
    <source>
    </source>
</evidence>
<evidence type="ECO:0000305" key="2"/>
<organismHost>
    <name type="scientific">Mycolicibacterium smegmatis (strain ATCC 700084 / mc(2)155)</name>
    <name type="common">Mycobacterium smegmatis</name>
    <dbReference type="NCBI Taxonomy" id="246196"/>
</organismHost>
<keyword id="KW-1256">DNA end degradation evasion by virus</keyword>
<keyword id="KW-0238">DNA-binding</keyword>
<keyword id="KW-0945">Host-virus interaction</keyword>
<keyword id="KW-1090">Inhibition of host innate immune response by virus</keyword>
<keyword id="KW-1185">Reference proteome</keyword>
<keyword id="KW-1253">Viral genome circularization</keyword>
<keyword id="KW-0899">Viral immunoevasion</keyword>
<keyword id="KW-1160">Virus entry into host cell</keyword>
<gene>
    <name type="primary">87</name>
</gene>
<name>KU_BPMCO</name>
<proteinExistence type="evidence at protein level"/>
<accession>Q856K7</accession>
<reference key="1">
    <citation type="journal article" date="2003" name="Cell">
        <title>Origins of highly mosaic mycobacteriophage genomes.</title>
        <authorList>
            <person name="Pedulla M.L."/>
            <person name="Ford M.E."/>
            <person name="Houtz J.M."/>
            <person name="Karthikeyan T."/>
            <person name="Wadsworth C."/>
            <person name="Lewis J.A."/>
            <person name="Jacobs-Sera D."/>
            <person name="Falbo J."/>
            <person name="Gross J."/>
            <person name="Pannunzio N.R."/>
            <person name="Brucker W."/>
            <person name="Kumar V."/>
            <person name="Kandasamy J."/>
            <person name="Keenan L."/>
            <person name="Bardarov S."/>
            <person name="Kriakov J."/>
            <person name="Lawrence J.G."/>
            <person name="Jacobs W.R. Jr."/>
            <person name="Hendrix R.W."/>
            <person name="Hatfull G.F."/>
        </authorList>
    </citation>
    <scope>NUCLEOTIDE SEQUENCE [GENOMIC DNA]</scope>
</reference>
<reference key="2">
    <citation type="journal article" date="2006" name="Mol. Cell">
        <title>Mycobacteriophage exploit NHEJ to facilitate genome circularization.</title>
        <authorList>
            <person name="Pitcher R.S."/>
            <person name="Tonkin L.M."/>
            <person name="Daley J.M."/>
            <person name="Palmbos P.L."/>
            <person name="Green A.J."/>
            <person name="Velting T.L."/>
            <person name="Brzostek A."/>
            <person name="Korycka-Machala M."/>
            <person name="Cresawn S."/>
            <person name="Dziadek J."/>
            <person name="Hatfull G.F."/>
            <person name="Wilson T.E."/>
            <person name="Doherty A.J."/>
        </authorList>
    </citation>
    <scope>FUNCTION</scope>
    <scope>SUBUNIT</scope>
    <scope>PROBABLE INTERACTION WITH HOST LIGD</scope>
    <scope>DNA-BINDING</scope>
</reference>
<comment type="function">
    <text evidence="1">Required for replication of viruses with short cos ends (4 bases). Stimulates dsDNA end-joining by host LigD. Binds dsDNA with either blunt, 5'- or 3-overhangs, protecting it from host exonuclease degradation.</text>
</comment>
<comment type="subunit">
    <text evidence="1 2">Homodimer (Probable). Interacts with host LigD.</text>
</comment>
<protein>
    <recommendedName>
        <fullName>Protein Ku</fullName>
    </recommendedName>
    <alternativeName>
        <fullName>Cd-Ku</fullName>
    </alternativeName>
    <alternativeName>
        <fullName>Gp87</fullName>
    </alternativeName>
</protein>
<sequence>MRSVGNVDLTIGLVTVPVKMVGVSESHDRKASMYHPHEDGNFGKIKMPKLCEDCGEVVPTADIAKGFEEGGDIVILTADELASIAAATGAALEVPQFVKAEQINPMLFANENIYRLVPDPKRGRQAATTYLMVRHILVSQELVGVVQYTRWGRNRLGVLDVEPSDDGGVLVIRNMMWADELRSTEGIVPTNVTEDDIDPRLLPVMASVVESMTGDWDPTAYTDRYTEQLSEAITAKAQGDEIATVASESGKAIDDVSDLLAKLEASIQKKAPAKKATARRKKTA</sequence>